<name>RN148_MOUSE</name>
<comment type="subcellular location">
    <subcellularLocation>
        <location evidence="4">Membrane</location>
        <topology evidence="4">Multi-pass membrane protein</topology>
    </subcellularLocation>
</comment>
<comment type="developmental stage">
    <text evidence="3">Expression begins in the testis at day 10 and increases dramatically from day 25 and thereafter.</text>
</comment>
<comment type="disruption phenotype">
    <text evidence="3">Male mutants fecundity is normal.</text>
</comment>
<gene>
    <name type="primary">Rnf148</name>
    <name type="synonym">Greul3</name>
</gene>
<keyword id="KW-0325">Glycoprotein</keyword>
<keyword id="KW-0472">Membrane</keyword>
<keyword id="KW-0479">Metal-binding</keyword>
<keyword id="KW-1185">Reference proteome</keyword>
<keyword id="KW-0732">Signal</keyword>
<keyword id="KW-0812">Transmembrane</keyword>
<keyword id="KW-1133">Transmembrane helix</keyword>
<keyword id="KW-0862">Zinc</keyword>
<keyword id="KW-0863">Zinc-finger</keyword>
<accession>G3X9R7</accession>
<accession>Q8CGR1</accession>
<accession>Q9D3V4</accession>
<dbReference type="EMBL" id="AY155440">
    <property type="protein sequence ID" value="AAN75221.1"/>
    <property type="molecule type" value="mRNA"/>
</dbReference>
<dbReference type="EMBL" id="AK017027">
    <property type="protein sequence ID" value="BAB30557.1"/>
    <property type="molecule type" value="mRNA"/>
</dbReference>
<dbReference type="EMBL" id="AC155850">
    <property type="status" value="NOT_ANNOTATED_CDS"/>
    <property type="molecule type" value="Genomic_DNA"/>
</dbReference>
<dbReference type="EMBL" id="CH466533">
    <property type="protein sequence ID" value="EDL13833.1"/>
    <property type="molecule type" value="Genomic_DNA"/>
</dbReference>
<dbReference type="CCDS" id="CCDS51726.1"/>
<dbReference type="RefSeq" id="NP_082030.1">
    <property type="nucleotide sequence ID" value="NM_027754.1"/>
</dbReference>
<dbReference type="SMR" id="G3X9R7"/>
<dbReference type="FunCoup" id="G3X9R7">
    <property type="interactions" value="11"/>
</dbReference>
<dbReference type="STRING" id="10090.ENSMUSP00000100592"/>
<dbReference type="GlyCosmos" id="G3X9R7">
    <property type="glycosylation" value="1 site, No reported glycans"/>
</dbReference>
<dbReference type="GlyGen" id="G3X9R7">
    <property type="glycosylation" value="2 sites"/>
</dbReference>
<dbReference type="PhosphoSitePlus" id="G3X9R7"/>
<dbReference type="SwissPalm" id="G3X9R7"/>
<dbReference type="PaxDb" id="10090-ENSMUSP00000100592"/>
<dbReference type="ProteomicsDB" id="300490"/>
<dbReference type="Antibodypedia" id="31742">
    <property type="antibodies" value="134 antibodies from 19 providers"/>
</dbReference>
<dbReference type="Ensembl" id="ENSMUST00000104979.2">
    <property type="protein sequence ID" value="ENSMUSP00000100592.2"/>
    <property type="gene ID" value="ENSMUSG00000078179.2"/>
</dbReference>
<dbReference type="GeneID" id="71300"/>
<dbReference type="KEGG" id="mmu:71300"/>
<dbReference type="UCSC" id="uc009bbl.2">
    <property type="organism name" value="mouse"/>
</dbReference>
<dbReference type="AGR" id="MGI:1918550"/>
<dbReference type="CTD" id="378925"/>
<dbReference type="MGI" id="MGI:1918550">
    <property type="gene designation" value="Rnf148"/>
</dbReference>
<dbReference type="VEuPathDB" id="HostDB:ENSMUSG00000078179"/>
<dbReference type="eggNOG" id="KOG4628">
    <property type="taxonomic scope" value="Eukaryota"/>
</dbReference>
<dbReference type="GeneTree" id="ENSGT00940000163382"/>
<dbReference type="HOGENOM" id="CLU_049885_1_0_1"/>
<dbReference type="InParanoid" id="G3X9R7"/>
<dbReference type="OMA" id="AVCLEMY"/>
<dbReference type="OrthoDB" id="5357315at2759"/>
<dbReference type="PhylomeDB" id="G3X9R7"/>
<dbReference type="TreeFam" id="TF317486"/>
<dbReference type="BioGRID-ORCS" id="71300">
    <property type="hits" value="3 hits in 78 CRISPR screens"/>
</dbReference>
<dbReference type="PRO" id="PR:G3X9R7"/>
<dbReference type="Proteomes" id="UP000000589">
    <property type="component" value="Chromosome 6"/>
</dbReference>
<dbReference type="RNAct" id="G3X9R7">
    <property type="molecule type" value="protein"/>
</dbReference>
<dbReference type="Bgee" id="ENSMUSG00000078179">
    <property type="expression patterns" value="Expressed in spermatid and 3 other cell types or tissues"/>
</dbReference>
<dbReference type="GO" id="GO:0016020">
    <property type="term" value="C:membrane"/>
    <property type="evidence" value="ECO:0007669"/>
    <property type="project" value="UniProtKB-SubCell"/>
</dbReference>
<dbReference type="GO" id="GO:0008270">
    <property type="term" value="F:zinc ion binding"/>
    <property type="evidence" value="ECO:0007669"/>
    <property type="project" value="UniProtKB-KW"/>
</dbReference>
<dbReference type="CDD" id="cd02122">
    <property type="entry name" value="PA_GRAIL_like"/>
    <property type="match status" value="1"/>
</dbReference>
<dbReference type="CDD" id="cd16802">
    <property type="entry name" value="RING-H2_RNF128-like"/>
    <property type="match status" value="1"/>
</dbReference>
<dbReference type="FunFam" id="3.50.30.30:FF:000003">
    <property type="entry name" value="E3 ubiquitin-protein ligase RNF128"/>
    <property type="match status" value="1"/>
</dbReference>
<dbReference type="FunFam" id="3.30.40.10:FF:000009">
    <property type="entry name" value="E3 ubiquitin-protein ligase RNF130"/>
    <property type="match status" value="1"/>
</dbReference>
<dbReference type="Gene3D" id="3.50.30.30">
    <property type="match status" value="1"/>
</dbReference>
<dbReference type="Gene3D" id="3.30.40.10">
    <property type="entry name" value="Zinc/RING finger domain, C3HC4 (zinc finger)"/>
    <property type="match status" value="1"/>
</dbReference>
<dbReference type="InterPro" id="IPR046450">
    <property type="entry name" value="PA_dom_sf"/>
</dbReference>
<dbReference type="InterPro" id="IPR003137">
    <property type="entry name" value="PA_domain"/>
</dbReference>
<dbReference type="InterPro" id="IPR051834">
    <property type="entry name" value="RING_finger_E3_ligase"/>
</dbReference>
<dbReference type="InterPro" id="IPR001841">
    <property type="entry name" value="Znf_RING"/>
</dbReference>
<dbReference type="InterPro" id="IPR013083">
    <property type="entry name" value="Znf_RING/FYVE/PHD"/>
</dbReference>
<dbReference type="PANTHER" id="PTHR45931:SF21">
    <property type="entry name" value="RING FINGER PROTEIN 130"/>
    <property type="match status" value="1"/>
</dbReference>
<dbReference type="PANTHER" id="PTHR45931">
    <property type="entry name" value="SI:CH211-59O9.10"/>
    <property type="match status" value="1"/>
</dbReference>
<dbReference type="Pfam" id="PF02225">
    <property type="entry name" value="PA"/>
    <property type="match status" value="1"/>
</dbReference>
<dbReference type="Pfam" id="PF13639">
    <property type="entry name" value="zf-RING_2"/>
    <property type="match status" value="1"/>
</dbReference>
<dbReference type="SMART" id="SM00184">
    <property type="entry name" value="RING"/>
    <property type="match status" value="1"/>
</dbReference>
<dbReference type="SUPFAM" id="SSF52025">
    <property type="entry name" value="PA domain"/>
    <property type="match status" value="1"/>
</dbReference>
<dbReference type="SUPFAM" id="SSF57850">
    <property type="entry name" value="RING/U-box"/>
    <property type="match status" value="1"/>
</dbReference>
<dbReference type="PROSITE" id="PS50089">
    <property type="entry name" value="ZF_RING_2"/>
    <property type="match status" value="1"/>
</dbReference>
<feature type="signal peptide" evidence="1">
    <location>
        <begin position="1"/>
        <end position="12"/>
    </location>
</feature>
<feature type="chain" id="PRO_0000415818" description="RING finger protein 148">
    <location>
        <begin position="13"/>
        <end position="316"/>
    </location>
</feature>
<feature type="transmembrane region" description="Helical" evidence="1">
    <location>
        <begin position="173"/>
        <end position="193"/>
    </location>
</feature>
<feature type="transmembrane region" description="Helical" evidence="1">
    <location>
        <begin position="204"/>
        <end position="224"/>
    </location>
</feature>
<feature type="domain" description="PA">
    <location>
        <begin position="84"/>
        <end position="178"/>
    </location>
</feature>
<feature type="zinc finger region" description="RING-type; atypical" evidence="2">
    <location>
        <begin position="269"/>
        <end position="310"/>
    </location>
</feature>
<feature type="glycosylation site" description="N-linked (GlcNAc...) asparagine" evidence="1">
    <location>
        <position position="56"/>
    </location>
</feature>
<feature type="sequence conflict" description="In Ref. 1; AAN75221." evidence="4" ref="1">
    <original>L</original>
    <variation>F</variation>
    <location>
        <position position="42"/>
    </location>
</feature>
<feature type="sequence conflict" description="In Ref. 2; BAB30557." evidence="4" ref="2">
    <original>G</original>
    <variation>E</variation>
    <location>
        <position position="258"/>
    </location>
</feature>
<organism>
    <name type="scientific">Mus musculus</name>
    <name type="common">Mouse</name>
    <dbReference type="NCBI Taxonomy" id="10090"/>
    <lineage>
        <taxon>Eukaryota</taxon>
        <taxon>Metazoa</taxon>
        <taxon>Chordata</taxon>
        <taxon>Craniata</taxon>
        <taxon>Vertebrata</taxon>
        <taxon>Euteleostomi</taxon>
        <taxon>Mammalia</taxon>
        <taxon>Eutheria</taxon>
        <taxon>Euarchontoglires</taxon>
        <taxon>Glires</taxon>
        <taxon>Rodentia</taxon>
        <taxon>Myomorpha</taxon>
        <taxon>Muroidea</taxon>
        <taxon>Muridae</taxon>
        <taxon>Murinae</taxon>
        <taxon>Mus</taxon>
        <taxon>Mus</taxon>
    </lineage>
</organism>
<sequence length="316" mass="35463">MLLCVSCLSVNGEMNPLGPTPSVHRSVSFWLLRLSVFLLLSLRDSKGKAIWTAHLNITFQVGNRIISELGESGVFGNHSPLERVSGAVVLPEGWNQNACSPLTNFSRPDQTDTWLALIERGGCTFTHKINLAAEKGANGVIIYNYPGTGNKVFPMSHQGTENIVAVMIGNLKGMELLHLIQQGVYVTIIIEVGRMHMPWLSHYVMSLFTFLAATVTYLFLYCAWRPRVSNSSTRRQRQLKADVKKAIGQLQLRVLQDGDKELDPNEDSCVVCFDMYKAQDVIRILTCKHFFHKTCIDPWLLAHRTCPMCKCDILKP</sequence>
<protein>
    <recommendedName>
        <fullName>RING finger protein 148</fullName>
    </recommendedName>
    <alternativeName>
        <fullName>Goliath-related E3 ubiquitin-protein ligase 3</fullName>
    </alternativeName>
</protein>
<proteinExistence type="evidence at transcript level"/>
<evidence type="ECO:0000255" key="1"/>
<evidence type="ECO:0000255" key="2">
    <source>
        <dbReference type="PROSITE-ProRule" id="PRU00175"/>
    </source>
</evidence>
<evidence type="ECO:0000269" key="3">
    <source>
    </source>
</evidence>
<evidence type="ECO:0000305" key="4"/>
<reference key="1">
    <citation type="journal article" date="2002" name="Dev. Biol.">
        <title>The E3 ubiquitin ligase GREUL1 anteriorizes ectoderm during Xenopus development.</title>
        <authorList>
            <person name="Borchers A.G.M."/>
            <person name="Hufton A.L."/>
            <person name="Eldridge A.G."/>
            <person name="Jackson P.K."/>
            <person name="Harland R.M."/>
            <person name="Baker J.C."/>
        </authorList>
    </citation>
    <scope>NUCLEOTIDE SEQUENCE [MRNA]</scope>
    <source>
        <strain>CD-1</strain>
    </source>
</reference>
<reference key="2">
    <citation type="journal article" date="2005" name="Science">
        <title>The transcriptional landscape of the mammalian genome.</title>
        <authorList>
            <person name="Carninci P."/>
            <person name="Kasukawa T."/>
            <person name="Katayama S."/>
            <person name="Gough J."/>
            <person name="Frith M.C."/>
            <person name="Maeda N."/>
            <person name="Oyama R."/>
            <person name="Ravasi T."/>
            <person name="Lenhard B."/>
            <person name="Wells C."/>
            <person name="Kodzius R."/>
            <person name="Shimokawa K."/>
            <person name="Bajic V.B."/>
            <person name="Brenner S.E."/>
            <person name="Batalov S."/>
            <person name="Forrest A.R."/>
            <person name="Zavolan M."/>
            <person name="Davis M.J."/>
            <person name="Wilming L.G."/>
            <person name="Aidinis V."/>
            <person name="Allen J.E."/>
            <person name="Ambesi-Impiombato A."/>
            <person name="Apweiler R."/>
            <person name="Aturaliya R.N."/>
            <person name="Bailey T.L."/>
            <person name="Bansal M."/>
            <person name="Baxter L."/>
            <person name="Beisel K.W."/>
            <person name="Bersano T."/>
            <person name="Bono H."/>
            <person name="Chalk A.M."/>
            <person name="Chiu K.P."/>
            <person name="Choudhary V."/>
            <person name="Christoffels A."/>
            <person name="Clutterbuck D.R."/>
            <person name="Crowe M.L."/>
            <person name="Dalla E."/>
            <person name="Dalrymple B.P."/>
            <person name="de Bono B."/>
            <person name="Della Gatta G."/>
            <person name="di Bernardo D."/>
            <person name="Down T."/>
            <person name="Engstrom P."/>
            <person name="Fagiolini M."/>
            <person name="Faulkner G."/>
            <person name="Fletcher C.F."/>
            <person name="Fukushima T."/>
            <person name="Furuno M."/>
            <person name="Futaki S."/>
            <person name="Gariboldi M."/>
            <person name="Georgii-Hemming P."/>
            <person name="Gingeras T.R."/>
            <person name="Gojobori T."/>
            <person name="Green R.E."/>
            <person name="Gustincich S."/>
            <person name="Harbers M."/>
            <person name="Hayashi Y."/>
            <person name="Hensch T.K."/>
            <person name="Hirokawa N."/>
            <person name="Hill D."/>
            <person name="Huminiecki L."/>
            <person name="Iacono M."/>
            <person name="Ikeo K."/>
            <person name="Iwama A."/>
            <person name="Ishikawa T."/>
            <person name="Jakt M."/>
            <person name="Kanapin A."/>
            <person name="Katoh M."/>
            <person name="Kawasawa Y."/>
            <person name="Kelso J."/>
            <person name="Kitamura H."/>
            <person name="Kitano H."/>
            <person name="Kollias G."/>
            <person name="Krishnan S.P."/>
            <person name="Kruger A."/>
            <person name="Kummerfeld S.K."/>
            <person name="Kurochkin I.V."/>
            <person name="Lareau L.F."/>
            <person name="Lazarevic D."/>
            <person name="Lipovich L."/>
            <person name="Liu J."/>
            <person name="Liuni S."/>
            <person name="McWilliam S."/>
            <person name="Madan Babu M."/>
            <person name="Madera M."/>
            <person name="Marchionni L."/>
            <person name="Matsuda H."/>
            <person name="Matsuzawa S."/>
            <person name="Miki H."/>
            <person name="Mignone F."/>
            <person name="Miyake S."/>
            <person name="Morris K."/>
            <person name="Mottagui-Tabar S."/>
            <person name="Mulder N."/>
            <person name="Nakano N."/>
            <person name="Nakauchi H."/>
            <person name="Ng P."/>
            <person name="Nilsson R."/>
            <person name="Nishiguchi S."/>
            <person name="Nishikawa S."/>
            <person name="Nori F."/>
            <person name="Ohara O."/>
            <person name="Okazaki Y."/>
            <person name="Orlando V."/>
            <person name="Pang K.C."/>
            <person name="Pavan W.J."/>
            <person name="Pavesi G."/>
            <person name="Pesole G."/>
            <person name="Petrovsky N."/>
            <person name="Piazza S."/>
            <person name="Reed J."/>
            <person name="Reid J.F."/>
            <person name="Ring B.Z."/>
            <person name="Ringwald M."/>
            <person name="Rost B."/>
            <person name="Ruan Y."/>
            <person name="Salzberg S.L."/>
            <person name="Sandelin A."/>
            <person name="Schneider C."/>
            <person name="Schoenbach C."/>
            <person name="Sekiguchi K."/>
            <person name="Semple C.A."/>
            <person name="Seno S."/>
            <person name="Sessa L."/>
            <person name="Sheng Y."/>
            <person name="Shibata Y."/>
            <person name="Shimada H."/>
            <person name="Shimada K."/>
            <person name="Silva D."/>
            <person name="Sinclair B."/>
            <person name="Sperling S."/>
            <person name="Stupka E."/>
            <person name="Sugiura K."/>
            <person name="Sultana R."/>
            <person name="Takenaka Y."/>
            <person name="Taki K."/>
            <person name="Tammoja K."/>
            <person name="Tan S.L."/>
            <person name="Tang S."/>
            <person name="Taylor M.S."/>
            <person name="Tegner J."/>
            <person name="Teichmann S.A."/>
            <person name="Ueda H.R."/>
            <person name="van Nimwegen E."/>
            <person name="Verardo R."/>
            <person name="Wei C.L."/>
            <person name="Yagi K."/>
            <person name="Yamanishi H."/>
            <person name="Zabarovsky E."/>
            <person name="Zhu S."/>
            <person name="Zimmer A."/>
            <person name="Hide W."/>
            <person name="Bult C."/>
            <person name="Grimmond S.M."/>
            <person name="Teasdale R.D."/>
            <person name="Liu E.T."/>
            <person name="Brusic V."/>
            <person name="Quackenbush J."/>
            <person name="Wahlestedt C."/>
            <person name="Mattick J.S."/>
            <person name="Hume D.A."/>
            <person name="Kai C."/>
            <person name="Sasaki D."/>
            <person name="Tomaru Y."/>
            <person name="Fukuda S."/>
            <person name="Kanamori-Katayama M."/>
            <person name="Suzuki M."/>
            <person name="Aoki J."/>
            <person name="Arakawa T."/>
            <person name="Iida J."/>
            <person name="Imamura K."/>
            <person name="Itoh M."/>
            <person name="Kato T."/>
            <person name="Kawaji H."/>
            <person name="Kawagashira N."/>
            <person name="Kawashima T."/>
            <person name="Kojima M."/>
            <person name="Kondo S."/>
            <person name="Konno H."/>
            <person name="Nakano K."/>
            <person name="Ninomiya N."/>
            <person name="Nishio T."/>
            <person name="Okada M."/>
            <person name="Plessy C."/>
            <person name="Shibata K."/>
            <person name="Shiraki T."/>
            <person name="Suzuki S."/>
            <person name="Tagami M."/>
            <person name="Waki K."/>
            <person name="Watahiki A."/>
            <person name="Okamura-Oho Y."/>
            <person name="Suzuki H."/>
            <person name="Kawai J."/>
            <person name="Hayashizaki Y."/>
        </authorList>
    </citation>
    <scope>NUCLEOTIDE SEQUENCE [LARGE SCALE MRNA]</scope>
    <source>
        <strain>C57BL/6J</strain>
        <tissue>Testis</tissue>
    </source>
</reference>
<reference key="3">
    <citation type="journal article" date="2009" name="PLoS Biol.">
        <title>Lineage-specific biology revealed by a finished genome assembly of the mouse.</title>
        <authorList>
            <person name="Church D.M."/>
            <person name="Goodstadt L."/>
            <person name="Hillier L.W."/>
            <person name="Zody M.C."/>
            <person name="Goldstein S."/>
            <person name="She X."/>
            <person name="Bult C.J."/>
            <person name="Agarwala R."/>
            <person name="Cherry J.L."/>
            <person name="DiCuccio M."/>
            <person name="Hlavina W."/>
            <person name="Kapustin Y."/>
            <person name="Meric P."/>
            <person name="Maglott D."/>
            <person name="Birtle Z."/>
            <person name="Marques A.C."/>
            <person name="Graves T."/>
            <person name="Zhou S."/>
            <person name="Teague B."/>
            <person name="Potamousis K."/>
            <person name="Churas C."/>
            <person name="Place M."/>
            <person name="Herschleb J."/>
            <person name="Runnheim R."/>
            <person name="Forrest D."/>
            <person name="Amos-Landgraf J."/>
            <person name="Schwartz D.C."/>
            <person name="Cheng Z."/>
            <person name="Lindblad-Toh K."/>
            <person name="Eichler E.E."/>
            <person name="Ponting C.P."/>
        </authorList>
    </citation>
    <scope>NUCLEOTIDE SEQUENCE [LARGE SCALE GENOMIC DNA]</scope>
    <source>
        <strain>C57BL/6J</strain>
    </source>
</reference>
<reference key="4">
    <citation type="submission" date="2005-07" db="EMBL/GenBank/DDBJ databases">
        <authorList>
            <person name="Mural R.J."/>
            <person name="Adams M.D."/>
            <person name="Myers E.W."/>
            <person name="Smith H.O."/>
            <person name="Venter J.C."/>
        </authorList>
    </citation>
    <scope>NUCLEOTIDE SEQUENCE [LARGE SCALE GENOMIC DNA]</scope>
</reference>
<reference key="5">
    <citation type="journal article" date="2022" name="BMC Biol.">
        <title>The testis-specific E3 ubiquitin ligase RNF133 is required for fecundity in mice.</title>
        <authorList>
            <person name="Nozawa K."/>
            <person name="Fujihara Y."/>
            <person name="Devlin D.J."/>
            <person name="Deras R.E."/>
            <person name="Kent K."/>
            <person name="Larina I.V."/>
            <person name="Umezu K."/>
            <person name="Yu Z."/>
            <person name="Sutton C.M."/>
            <person name="Ye Q."/>
            <person name="Dean L.K."/>
            <person name="Emori C."/>
            <person name="Ikawa M."/>
            <person name="Garcia T.X."/>
            <person name="Matzuk M.M."/>
        </authorList>
    </citation>
    <scope>DISRUPTION PHENOTYPE</scope>
    <scope>TISSUE SPECIFICITY</scope>
    <scope>DEVELOPMENTAL STAGE</scope>
</reference>